<reference key="1">
    <citation type="journal article" date="2000" name="J. Biol. Chem.">
        <title>Molecular cloning and characterization of Pals, proteins associated with mLin-7.</title>
        <authorList>
            <person name="Kamberov E."/>
            <person name="Makarova O."/>
            <person name="Roh M."/>
            <person name="Liu A."/>
            <person name="Karnak D."/>
            <person name="Straight S."/>
            <person name="Margolis B."/>
        </authorList>
    </citation>
    <scope>NUCLEOTIDE SEQUENCE [MRNA]</scope>
    <scope>MUTAGENESIS OF GLU-207; LEU-208; LEU-212; HIS-216; LEU-221; HIS-224; ASP-225 AND VAL-227</scope>
    <scope>TISSUE SPECIFICITY</scope>
    <scope>SUBCELLULAR LOCATION</scope>
    <scope>INTERACTION WITH LIN7C</scope>
    <source>
        <tissue>Embryo</tissue>
    </source>
</reference>
<reference key="2">
    <citation type="journal article" date="2002" name="J. Cell Biol.">
        <title>The Maguk protein, Pals1, functions as an adapter, linking mammalian homologues of Crumbs and Discs Lost.</title>
        <authorList>
            <person name="Roh M.H."/>
            <person name="Makarova O."/>
            <person name="Liu C.-J."/>
            <person name="Shin K."/>
            <person name="Lee S."/>
            <person name="Laurinec S."/>
            <person name="Goyal M."/>
            <person name="Wiggins R."/>
            <person name="Margolis B."/>
        </authorList>
    </citation>
    <scope>INTERACTION WITH PATJ</scope>
    <scope>DOMAIN</scope>
    <scope>SUBCELLULAR LOCATION</scope>
    <scope>MUTAGENESIS OF LEU-150 AND VAL-154</scope>
</reference>
<reference key="3">
    <citation type="journal article" date="2003" name="Gene">
        <title>Mammalian Crumbs3 is a small transmembrane protein linked to protein associated with Lin-7 (Pals1).</title>
        <authorList>
            <person name="Makarova O."/>
            <person name="Roh M.H."/>
            <person name="Liu C.-J."/>
            <person name="Laurinec S."/>
            <person name="Margolis B."/>
        </authorList>
    </citation>
    <scope>INTERACTION WITH CRB3 AND PATJ</scope>
</reference>
<reference key="4">
    <citation type="journal article" date="2003" name="Nat. Cell Biol.">
        <title>Direct interaction of two polarity complexes implicated in epithelial tight junction assembly.</title>
        <authorList>
            <person name="Hurd T.W."/>
            <person name="Gao L."/>
            <person name="Roh M.H."/>
            <person name="Macara I.G."/>
            <person name="Margolis B."/>
        </authorList>
    </citation>
    <scope>INTERACTION WITH PARD6B</scope>
</reference>
<reference key="5">
    <citation type="journal article" date="2004" name="J. Biol. Chem.">
        <title>Tight junction protein Par6 interacts with an evolutionarily conserved region in the amino terminus of PALS1/stardust.</title>
        <authorList>
            <person name="Wang Q."/>
            <person name="Hurd T.W."/>
            <person name="Margolis B."/>
        </authorList>
    </citation>
    <scope>MUTAGENESIS OF HIS-32; ARG-33; GLU-34; ALA-36; VAL-37; ASP-38; CYS-39 AND PRO-40</scope>
    <scope>SUBCELLULAR LOCATION</scope>
    <scope>INTERACTION WITH PARD6B</scope>
</reference>
<reference key="6">
    <citation type="journal article" date="2004" name="J. Cell Sci.">
        <title>Crumbs homologue 1 is required for maintenance of photoreceptor cell polarization and adhesion during light exposure.</title>
        <authorList>
            <person name="van de Pavert S.A."/>
            <person name="Kantardzhieva A."/>
            <person name="Malysheva A."/>
            <person name="Meuleman J."/>
            <person name="Versteeg I."/>
            <person name="Levelt C."/>
            <person name="Klooster J."/>
            <person name="Geiger S."/>
            <person name="Seeliger M.W."/>
            <person name="Rashbass P."/>
            <person name="Le Bivic A."/>
            <person name="Wijnholds J."/>
        </authorList>
    </citation>
    <scope>INTERACTION WITH MPDZ</scope>
</reference>
<reference key="7">
    <citation type="journal article" date="2004" name="Mol. Cell. Neurosci.">
        <title>The GABA transporter GAT1 and the MAGUK protein Pals1: interaction, uptake modulation, and coexpression in the brain.</title>
        <authorList>
            <person name="McHugh E.M."/>
            <person name="Zhu W."/>
            <person name="Milgram S."/>
            <person name="Mager S."/>
        </authorList>
    </citation>
    <scope>FUNCTION</scope>
    <scope>INTERACTION WITH SC6A1</scope>
    <scope>SUBCELLULAR LOCATION</scope>
    <scope>TISSUE SPECIFICITY</scope>
    <scope>DOMAIN</scope>
</reference>
<reference key="8">
    <citation type="journal article" date="2005" name="J. Biol. Chem.">
        <title>PALS1 specifies the localization of Ezrin to the apical membrane of gastric parietal cells.</title>
        <authorList>
            <person name="Cao X."/>
            <person name="Ding X."/>
            <person name="Guo Z."/>
            <person name="Zhou R."/>
            <person name="Wang F."/>
            <person name="Long F."/>
            <person name="Wu F."/>
            <person name="Bi F."/>
            <person name="Wang Q."/>
            <person name="Fan D."/>
            <person name="Forte J.G."/>
            <person name="Teng M."/>
            <person name="Yao X."/>
        </authorList>
    </citation>
    <scope>INTERACTION WITH EZR</scope>
    <scope>SUBCELLULAR LOCATION</scope>
    <scope>FUNCTION</scope>
</reference>
<reference key="9">
    <citation type="journal article" date="2005" name="J. Comp. Neurol.">
        <title>Membrane-associated guanylate kinase proteins MPP4 and MPP5 associate with Veli3 at distinct intercellular junctions of the neurosensory retina.</title>
        <authorList>
            <person name="Stoehr H."/>
            <person name="Molday L.L."/>
            <person name="Molday R.S."/>
            <person name="Weber B.H.F."/>
            <person name="Biedermann B."/>
            <person name="Reichenbach A."/>
            <person name="Kraemer F."/>
        </authorList>
    </citation>
    <scope>TISSUE SPECIFICITY</scope>
    <scope>SUBCELLULAR LOCATION</scope>
</reference>
<reference key="10">
    <citation type="journal article" date="2006" name="FEBS J.">
        <title>MPP3 is recruited to the MPP5 protein scaffold at the retinal outer limiting membrane.</title>
        <authorList>
            <person name="Kantardzhieva A."/>
            <person name="Alexeeva S."/>
            <person name="Versteeg I."/>
            <person name="Wijnholds J."/>
        </authorList>
    </citation>
    <scope>IDENTIFICATION IN A COMPLEX WITH MPP3 AND CRB1</scope>
</reference>
<reference key="11">
    <citation type="journal article" date="2007" name="Exp. Cell Res.">
        <title>FERM protein EPB41L5 is a novel member of the mammalian CRB-MPP5 polarity complex.</title>
        <authorList>
            <person name="Gosens I."/>
            <person name="Sessa A."/>
            <person name="den Hollander A.I."/>
            <person name="Letteboer S.J.F."/>
            <person name="Belloni V."/>
            <person name="Arends M.L."/>
            <person name="Le Bivic A."/>
            <person name="Cremers F.P.M."/>
            <person name="Broccoli V."/>
            <person name="Roepman R."/>
        </authorList>
    </citation>
    <scope>DEVELOPMENTAL STAGE</scope>
</reference>
<reference key="12">
    <citation type="journal article" date="2007" name="Mol. Biol. Cell">
        <title>PALS1 regulates E-cadherin trafficking in mammalian epithelial cells.</title>
        <authorList>
            <person name="Wang Q."/>
            <person name="Chen X.W."/>
            <person name="Margolis B."/>
        </authorList>
    </citation>
    <scope>FUNCTION</scope>
    <scope>DOMAIN</scope>
    <scope>MUTAGENESIS OF LEU-379</scope>
</reference>
<reference key="13">
    <citation type="journal article" date="2010" name="Cell">
        <title>A tissue-specific atlas of mouse protein phosphorylation and expression.</title>
        <authorList>
            <person name="Huttlin E.L."/>
            <person name="Jedrychowski M.P."/>
            <person name="Elias J.E."/>
            <person name="Goswami T."/>
            <person name="Rad R."/>
            <person name="Beausoleil S.A."/>
            <person name="Villen J."/>
            <person name="Haas W."/>
            <person name="Sowa M.E."/>
            <person name="Gygi S.P."/>
        </authorList>
    </citation>
    <scope>PHOSPHORYLATION [LARGE SCALE ANALYSIS] AT SER-25</scope>
    <scope>IDENTIFICATION BY MASS SPECTROMETRY [LARGE SCALE ANALYSIS]</scope>
    <source>
        <tissue>Brain</tissue>
        <tissue>Kidney</tissue>
        <tissue>Lung</tissue>
    </source>
</reference>
<reference key="14">
    <citation type="journal article" date="2010" name="Dev. Cell">
        <title>The Crumbs complex couples cell density sensing to Hippo-dependent control of the TGF-beta-SMAD pathway.</title>
        <authorList>
            <person name="Varelas X."/>
            <person name="Samavarchi-Tehrani P."/>
            <person name="Narimatsu M."/>
            <person name="Weiss A."/>
            <person name="Cockburn K."/>
            <person name="Larsen B.G."/>
            <person name="Rossant J."/>
            <person name="Wrana J.L."/>
        </authorList>
    </citation>
    <scope>FUNCTION</scope>
    <scope>INTERACTION WITH WWTR1</scope>
    <scope>SUBCELLULAR LOCATION</scope>
</reference>
<reference key="15">
    <citation type="journal article" date="2010" name="J. Neurosci.">
        <title>Pals1 is a major regulator of the epithelial-like polarization and the extension of the myelin sheath in peripheral nerves.</title>
        <authorList>
            <person name="Ozcelik M."/>
            <person name="Cotter L."/>
            <person name="Jacob C."/>
            <person name="Pereira J.A."/>
            <person name="Relvas J.B."/>
            <person name="Suter U."/>
            <person name="Tricaud N."/>
        </authorList>
    </citation>
    <scope>FUNCTION</scope>
    <scope>SUBCELLULAR LOCATION</scope>
    <scope>TISSUE SPECIFICITY</scope>
    <scope>DEVELOPMENTAL STAGE</scope>
    <scope>DISRUPTION PHENOTYPE</scope>
</reference>
<reference key="16">
    <citation type="journal article" date="2010" name="Neuron">
        <title>The apical complex couples cell fate and cell survival to cerebral cortical development.</title>
        <authorList>
            <person name="Kim S."/>
            <person name="Lehtinen M.K."/>
            <person name="Sessa A."/>
            <person name="Zappaterra M.W."/>
            <person name="Cho S.H."/>
            <person name="Gonzalez D."/>
            <person name="Boggan B."/>
            <person name="Austin C.A."/>
            <person name="Wijnholds J."/>
            <person name="Gambello M.J."/>
            <person name="Malicki J."/>
            <person name="LaMantia A.S."/>
            <person name="Broccoli V."/>
            <person name="Walsh C.A."/>
        </authorList>
    </citation>
    <scope>FUNCTION</scope>
    <scope>INTERACTION WITH PATJ AND CRB2</scope>
    <scope>DEVELOPMENTAL STAGE</scope>
    <scope>DISRUPTION PHENOTYPE</scope>
</reference>
<reference key="17">
    <citation type="journal article" date="2012" name="Hum. Mol. Genet.">
        <title>Genetic ablation of Pals1 in retinal progenitor cells models the retinal pathology of Leber congenital amaurosis.</title>
        <authorList>
            <person name="Cho S.H."/>
            <person name="Kim J.Y."/>
            <person name="Simons D.L."/>
            <person name="Song J.Y."/>
            <person name="Le J.H."/>
            <person name="Swindell E.C."/>
            <person name="Jamrich M."/>
            <person name="Wu S.M."/>
            <person name="Kim S."/>
        </authorList>
    </citation>
    <scope>FUNCTION</scope>
    <scope>TISSUE SPECIFICITY</scope>
    <scope>DEVELOPMENTAL STAGE</scope>
    <scope>DISRUPTION PHENOTYPE</scope>
</reference>
<reference key="18">
    <citation type="journal article" date="2013" name="Glia">
        <title>MPP3 regulates levels of PALS1 and adhesion between photoreceptors and Mueller cells.</title>
        <authorList>
            <person name="Dudok J.J."/>
            <person name="Sanz A.S."/>
            <person name="Lundvig D.M."/>
            <person name="Sothilingam V."/>
            <person name="Garcia Garrido M."/>
            <person name="Klooster J."/>
            <person name="Seeliger M.W."/>
            <person name="Wijnholds J."/>
        </authorList>
    </citation>
    <scope>TISSUE SPECIFICITY</scope>
    <scope>DISRUPTION PHENOTYPE</scope>
</reference>
<reference key="19">
    <citation type="journal article" date="2013" name="Hum. Mol. Genet.">
        <title>Loss of CRB2 in the mouse retina mimics human retinitis pigmentosa due to mutations in the CRB1 gene.</title>
        <authorList>
            <person name="Alves C.H."/>
            <person name="Sanz A.S."/>
            <person name="Park B."/>
            <person name="Pellissier L.P."/>
            <person name="Tanimoto N."/>
            <person name="Beck S.C."/>
            <person name="Huber G."/>
            <person name="Murtaza M."/>
            <person name="Richard F."/>
            <person name="Sridevi Gurubaran I."/>
            <person name="Garcia Garrido M."/>
            <person name="Levelt C.N."/>
            <person name="Rashbass P."/>
            <person name="Le Bivic A."/>
            <person name="Seeliger M.W."/>
            <person name="Wijnholds J."/>
        </authorList>
    </citation>
    <scope>DEVELOPMENTAL STAGE</scope>
</reference>
<reference key="20">
    <citation type="journal article" date="2015" name="Sci. Rep.">
        <title>CRB2 completes a fully expressed Crumbs complex in the Retinal Pigment Epithelium.</title>
        <authorList>
            <person name="Paniagua A.E."/>
            <person name="Herranz-Martin S."/>
            <person name="Jimeno D."/>
            <person name="Jimeno A.M."/>
            <person name="Lopez-Benito S."/>
            <person name="Carlos Arevalo J."/>
            <person name="Velasco A."/>
            <person name="Aijon J."/>
            <person name="Lillo C."/>
        </authorList>
    </citation>
    <scope>FUNCTION</scope>
    <scope>SUBCELLULAR LOCATION</scope>
    <scope>TISSUE SPECIFICITY</scope>
</reference>
<reference key="21">
    <citation type="journal article" date="2016" name="Development">
        <title>The apical complex protein Pals1 is required to maintain cerebellar progenitor cells in a proliferative state.</title>
        <authorList>
            <person name="Park J.Y."/>
            <person name="Hughes L.J."/>
            <person name="Moon U.Y."/>
            <person name="Park R."/>
            <person name="Kim S.B."/>
            <person name="Tran K."/>
            <person name="Lee J.S."/>
            <person name="Cho S.H."/>
            <person name="Kim S."/>
        </authorList>
    </citation>
    <scope>FUNCTION</scope>
    <scope>SUBCELLULAR LOCATION</scope>
    <scope>DEVELOPMENTAL STAGE</scope>
    <scope>DISRUPTION PHENOTYPE</scope>
</reference>
<reference key="22">
    <citation type="journal article" date="2016" name="Mol. Biol. Cell">
        <title>VE-cadherin interacts with cell polarity protein Pals1 to regulate vascular lumen formation.</title>
        <authorList>
            <person name="Brinkmann B.F."/>
            <person name="Steinbacher T."/>
            <person name="Hartmann C."/>
            <person name="Kummer D."/>
            <person name="Pajonczyk D."/>
            <person name="Mirzapourshafiyi F."/>
            <person name="Nakayama M."/>
            <person name="Weide T."/>
            <person name="Gerke V."/>
            <person name="Ebnet K."/>
        </authorList>
    </citation>
    <scope>TISSUE SPECIFICITY</scope>
    <scope>INTERACTION WITH CDH5</scope>
</reference>
<reference key="23">
    <citation type="journal article" date="2004" name="EMBO J.">
        <title>Structural basis for L27 domain-mediated assembly of signaling and cell polarity complexes.</title>
        <authorList>
            <person name="Li Y."/>
            <person name="Karnak D."/>
            <person name="Demeler B."/>
            <person name="Margolis B."/>
            <person name="Lavie A."/>
        </authorList>
    </citation>
    <scope>X-RAY CRYSTALLOGRAPHY (2.1 ANGSTROMS) OF 123-180</scope>
</reference>
<reference key="24">
    <citation type="submission" date="2005-02" db="PDB data bank">
        <title>Solution structure of the PDZ domain of PALS1 protein.</title>
        <authorList>
            <consortium name="RIKEN structural genomics initiative (RSGI)"/>
        </authorList>
    </citation>
    <scope>STRUCTURE BY NMR OF 236-335</scope>
</reference>
<comment type="function">
    <text evidence="1 3 14 17 19 21 22 23 24 27 28">Plays a role in tight junction biogenesis and in the establishment of cell polarity in epithelial cells (By similarity). Also involved in adherens junction biogenesis by ensuring correct localization of the exocyst complex protein EXOC4/SEC8 which allows trafficking of adherens junction structural component CDH1 to the cell surface (PubMed:17182851, PubMed:20237282). Plays a role through its interaction with CDH5 in vascular lumen formation and endothelial membrane polarity (By similarity). Required during embryonic and postnatal retinal development (PubMed:22398208). Required for the maintenance of cerebellar progenitor cells in an undifferentiated proliferative state, preventing premature differentiation, and is required for cerebellar histogenesis, fissure formation, cerebellar layer organization and cortical development (PubMed:20399730, PubMed:26404741). Plays a role in neuronal progenitor cell survival, potentially via promotion of mTOR signaling (PubMed:20399730). Plays a role in the radial and longitudinal extension of the myelin sheath in Schwann cells (PubMed:20237282). May modulate SC6A1/GAT1-mediated GABA uptake by stabilizing the transporter (PubMed:15234345). May play a role in the T-cell receptor-mediated activation of NF-kappa-B (By similarity). Required for localization of EZR to the apical membrane of parietal cells and may play a role in the dynamic remodeling of the apical cytoskeleton (PubMed:15677456). Required for the normal polarized localization of the vesicular marker STX4 (PubMed:20237282). Required for the correct trafficking of the myelin proteins PMP22 and MAG (By similarity). Involved in promoting phosphorylation and cytoplasmic retention of transcriptional coactivators YAP1 and WWTR1/TAZ which leads to suppression of TGFB1-dependent transcription of target genes such as CCN2/CTGF, SERPINE1/PAI1, SNAI1/SNAIL1 and SMAD7 (PubMed:21145499).</text>
</comment>
<comment type="subunit">
    <text evidence="2 3 9 10 11 12 13 14 15 17 18 22 23 29">Heterodimer with MPP1 (By similarity). Forms a heterotrimeric complex composed of PALS1, LIN7B and PATJ; the N-terminal L27 domain of PALS1 interacts with the L27 domain of PATJ and the C-terminal L27 domain of PALS1 interacts with the L27 domain of LIN7B (By similarity). Component of a complex composed of PALS1, CRB1 and MPP4 (By similarity). Component of a complex whose core is composed of ARHGAP17, AMOT, PALS1, PATJ and PARD3/PAR3 (By similarity). Component of a complex composed of PALS1, CRB1 and EPB41L5 (By similarity). Within the complex, interacts (via HOOK domain) with EPB41L5 (via FERM domain), and interacts with CRB1 (via intracellular domain) (By similarity). Component of a complex composed of PALS1, MPP3 and CRB1; PALS1 acts as a bridging protein between MPP3 (via guanylate kinase-like domain) and CRB1 (PubMed:16519681). Component of a complex composed of CRB3, PALS1 and PATJ (By similarity). As part of the Crumbs complex; interacts with WWP1, the interaction is enhanced by AMOTL2 and facilitates WWP1 localization to the plasma membrane (By similarity). The Crumbs complex promotes monoubiquitination of AMOTL2 by WWP1, which activates the Hippo signaling pathway (By similarity). Interacts (via PDZ domain) with PATJ (via N-terminus) (PubMed:11927608, PubMed:12527193, PubMed:20399730). Interacts with EZR (PubMed:15677456). Interacts (via PDZ domain) with CRB1 (via C-terminal ERLI motif) (By similarity). While the PDZ domain is sufficient for interaction with CRB1, the adjacent SH3 and guanylate kinase-like domains are likely to contribute to a high affinity interaction (By similarity). Interacts with WWTR1/TAZ (via WW domain) (PubMed:21145499). Interacts with MPP7 (By similarity). Interacts (via PDZ domain) with CRB3 (via C-terminus) (PubMed:12527193). Interacts with LIN7C (PubMed:10753959). Interacts with MPDZ (PubMed:15316081). Interacts with PARD6B (PubMed:12545177, PubMed:15140881). Interacts with SC6A1 (PubMed:15234345). Interacts with CDH5; the interaction promotes PALS1 localization to cell junctions and is required for CDH5-mediated vascular lumen formation and endothelial cell (PubMed:27466317). Interacts with NPHP1 (via coiled coil and SH3 domains) (By similarity). Interacts with NPHP4 (By similarity). Interacts with CRB2 (PubMed:20399730).</text>
</comment>
<comment type="subcellular location">
    <subcellularLocation>
        <location evidence="3">Golgi apparatus</location>
    </subcellularLocation>
    <subcellularLocation>
        <location>Cell membrane</location>
        <topology>Peripheral membrane protein</topology>
    </subcellularLocation>
    <subcellularLocation>
        <location>Endomembrane system</location>
        <topology>Peripheral membrane protein</topology>
    </subcellularLocation>
    <subcellularLocation>
        <location evidence="23">Cell junction</location>
        <location evidence="23">Tight junction</location>
    </subcellularLocation>
    <subcellularLocation>
        <location evidence="3">Cell junction</location>
        <location evidence="3">Adherens junction</location>
    </subcellularLocation>
    <subcellularLocation>
        <location evidence="14">Cell projection</location>
        <location evidence="14">Axon</location>
    </subcellularLocation>
    <subcellularLocation>
        <location evidence="14">Perikaryon</location>
    </subcellularLocation>
    <subcellularLocation>
        <location evidence="27 28">Apical cell membrane</location>
    </subcellularLocation>
    <text evidence="3 9 10 13 14 16 17 21">Localized to the tight junctions of epithelial cells (PubMed:10753959, PubMed:11927608, PubMed:15140881, PubMed:15677456). Localized to the Golgi apparatus in T lymphocytes (By similarity). Localized to a subset of intracellular vesicles (PubMed:15234345). Localized to the Purkinje cell body and axon (PubMed:15234345). Localized to intercellular junctions in vascular endothelial cells (By similarity). Localized to Schmidt-Lanterman incisures, the adaxonal domain, and the inner part of paranodal loops in myelinating Schwann cells of the sciatic nerve (PubMed:20237282). Localized to apical membrane domains of the outer limiting membrane (OLM) junctions in the retina (PubMed:15558731). Colocalizes with CRB1 at the OLM, apical to the adherens junction (By similarity). Colocalizes with MPP1 in the retina at the OLM (By similarity). Colocalizes with MPP3 to the subapical region of adherens junctions in the retina OLM (By similarity).</text>
</comment>
<comment type="tissue specificity">
    <text evidence="9 14 16 21 24 26 27 29">Expressed in the retinal pigment epithelium (at protein level) (PubMed:15558731, PubMed:22398208, PubMed:23893895, PubMed:26404741). Expressed in the vascular plexus of the retina (at protein level) (PubMed:27466317). In the brain, expressed in the dentate gyrus of hippocampus, striatum and cerebellum (at protein level) (PubMed:15234345, PubMed:26404741). Expressed in the sciatic nerve (at protein level) (PubMed:20237282). Expressed in the kidney nephron (at protein level) (PubMed:10753959, PubMed:15558731). Expressed in the lung, and heart (PubMed:10753959, PubMed:15558731). Expressed in placenta, brain, skeletal muscles, pancreas and liver (PubMed:10753959).</text>
</comment>
<comment type="developmental stage">
    <text evidence="20 21 22 24 25 28">Expressed in the developing sciatic nerve, with increasing expression from newborn to postnatal day 20, and decreasing expression at postnatal day 60 (P60) (at protein level) (PubMed:20237282). Expressed in the developing neural tube, optic vesicle, branchial arches and kidney at 10.5 dpc (PubMed:17920587). Expressed in the ventricular layers of the developing neural tube along the entire cranial-caudal length, including the anterior forebrain and the posterior spinal cord at 11.5 dpc (PubMed:17920587). Highly expressed in cortical progenitor cells at 12 dpc, expression decreases during neurogenesis but weak expression is still present at birth (PubMed:20399730). Expressed in the developing brain at 15.5 dpc in the upper rhombic lip, ventricular zone, and external granule layer (EGL) (at protein level) (PubMed:26657772). At birth expressed in the ventricular apical lining cells, proliferating external granule layer and Purkinje cell layer (PCL), with expression remaining abundant in the EGL and weakly evident in the PCL at P6 (at protein level) (PubMed:26657772). Expressed at P8 in the EGL, cerebellar granule neuron precursors, Bergmann glia, Pcna-positive progenitor cells in the white matter, and weakly in Pax6-positive postmitotic granule neurons (at protein level) (PubMed:26657772). Expressed weakly throughout the retina between 12.5 dpc and 14.5 dpc, becoming enriched in progenitors at the outer neuroblastic layer at 14.5 dpc (PubMed:22398208). Expressed in the retinal layer of the optic vesicle, and weakly expressed in the retinal pigment epithelium at 12.5 dpc (PubMed:17920587). Localized to the apical edge of the retina between 12.5 and 16.5 dpc (PubMed:22398208). Expressed in the internal endodermal layer and in the developing saccules of the lung at 11.5 dpc (PubMed:17920587). Expressed at the outer limiting membrane of the retina at 18.5 dpc and 3 months of age (PubMed:23001562).</text>
</comment>
<comment type="domain">
    <text evidence="10 19">The L27 domain 1 functions in targeting to the tight junctions by binding to and stabilizing PATJ.</text>
</comment>
<comment type="domain">
    <text evidence="14">The PDZ domain binds to the C-terminus of SC6A1.</text>
</comment>
<comment type="disruption phenotype">
    <text evidence="21 22 24 26 28">Conditional knockout in the retina results in mice which are viable, fertile, and morphologically normal apart from microphthalmia with severe defects in visual response (PubMed:22398208). From 13.5 days post-conception (dpc) retinas show variable morphology, including retinal folding, variable thickness and disorganization (PubMed:22398208). Postnatally the retinal lamina is thinner, and disorganized, with a shortening or absence of the inner and outer segments of photoreceptor cells (PubMed:22398208). By postnatal day 60 retinas are completely or partially devoid of the outer nuclear layers and photoreceptor layer, and feature a reduced number of photoreceptor cells, disrupted cell polarity and impaired distribution of retinal neurons (PubMed:22398208). Retinal distribution of Par3 and the Crb polarity complex proteins Crbs and Patj is disrupted (PubMed:22398208). Mature mice show aberrant proliferation and apoptosis of retinal epithelia with significantly reduced or undetectable a- and b-waves in electroretinogram-measured dark-adapted response (PubMed:22398208). Conditional knockout in cerebellum proliferating progenitors at 13.5 dpc results in mislocalization of apical polarity complex proteins such as Crb proteins, Pard3, and Prkci at 15.5 dpc (PubMed:26657772). Following cerebellum conditional knockout there is an increase in migration and premature differentiation of Pax2-positive ventricular zone cells at 17.5 dpc, resulting in a reduced number of glial cell progenitors (PubMed:26657772). Conditional knockout in cerebellum results in stunted cerebellum growth and indistinct vermis foliation at birth, there is also an evident reduction of Bergmann glia, oligodendrocyte, astrocyte and GABAergic interneuron progenitors (PubMed:26657772). Conditional knockout in cerebellum shows compromised Purkinje cell migration and formation failure of Purkinje cell plate to contain both Bergmann glia and Purkinje cells, possibly as a result of abnormal Reln-Dab1 signaling at P6 (PubMed:26657772). Conditional knockout in cerebellum results in poorly layered, smaller lobes, severe defects in fissure formation and a reduced number of cerebellar granule neurons and GABAergic interneurons from P8 to P21 (PubMed:26657772). Conditional knockout in the cortex results in mice surviving to adulthood, with lower body weight but exhibit irregular movements with disrupted stride and gait, reduced exploratory initiative, reduced locomotor behavior and swim in circles (PubMed:20399730). Reduced cortical size and disrupted morphology at 12 and 14 dpc resulting in the absence of the cortex postnatally lacking virtually all cortical neurons, additionally extreme thinning of the lateral cortex is observed (PubMed:20399730). Reduced proliferation of cortical progenitor cells and increased cell death of postmitotic neurons in the developing medial cortex and ventral zone from 10.5 dpc, additionally mislocalization and reduced abundance of Crb2 and Prkci is evident (PubMed:20399730). RNAi-mediated knockdown in the sciatic nerve results in mislocalization of Exoc4/Sec8 and Stx4 in Schwann cells and thinning and shortening of Schwann cells as a result of a reduction in the myelinated fiber diameter caused by fewer myelin turns (PubMed:20237282). Conditional knockout of both Mpp3 and Pals1 in the retina results in an increase in retinal degeneration that becomes evident at one month of age (PubMed:23893895).</text>
</comment>
<comment type="similarity">
    <text evidence="32">Belongs to the MAGUK family.</text>
</comment>
<feature type="chain" id="PRO_0000094581" description="Protein PALS1">
    <location>
        <begin position="1"/>
        <end position="675"/>
    </location>
</feature>
<feature type="domain" description="L27 1" evidence="7">
    <location>
        <begin position="120"/>
        <end position="177"/>
    </location>
</feature>
<feature type="domain" description="L27 2" evidence="7">
    <location>
        <begin position="179"/>
        <end position="235"/>
    </location>
</feature>
<feature type="domain" description="PDZ" evidence="5">
    <location>
        <begin position="256"/>
        <end position="336"/>
    </location>
</feature>
<feature type="domain" description="SH3" evidence="6">
    <location>
        <begin position="345"/>
        <end position="417"/>
    </location>
</feature>
<feature type="domain" description="Guanylate kinase-like" evidence="4">
    <location>
        <begin position="479"/>
        <end position="660"/>
    </location>
</feature>
<feature type="region of interest" description="Required for the correct localization of PALS1 and PATJ at cell-cell contacts and the normal formation of tight junctions and adherens junctions" evidence="19">
    <location>
        <begin position="1"/>
        <end position="345"/>
    </location>
</feature>
<feature type="region of interest" description="Interaction with PARD6B" evidence="13">
    <location>
        <begin position="21"/>
        <end position="140"/>
    </location>
</feature>
<feature type="region of interest" description="Disordered" evidence="8">
    <location>
        <begin position="51"/>
        <end position="79"/>
    </location>
</feature>
<feature type="region of interest" description="Interaction with LIN7C" evidence="9">
    <location>
        <begin position="181"/>
        <end position="243"/>
    </location>
</feature>
<feature type="compositionally biased region" description="Basic and acidic residues" evidence="8">
    <location>
        <begin position="54"/>
        <end position="79"/>
    </location>
</feature>
<feature type="binding site" evidence="4">
    <location>
        <begin position="486"/>
        <end position="493"/>
    </location>
    <ligand>
        <name>ATP</name>
        <dbReference type="ChEBI" id="CHEBI:30616"/>
    </ligand>
</feature>
<feature type="modified residue" description="Phosphoserine" evidence="3">
    <location>
        <position position="14"/>
    </location>
</feature>
<feature type="modified residue" description="Phosphoserine" evidence="34">
    <location>
        <position position="25"/>
    </location>
</feature>
<feature type="modified residue" description="Phosphoserine" evidence="3">
    <location>
        <position position="83"/>
    </location>
</feature>
<feature type="modified residue" description="Phosphoserine" evidence="3">
    <location>
        <position position="84"/>
    </location>
</feature>
<feature type="mutagenesis site" description="No effect on interaction with PARD6B." evidence="13">
    <original>H</original>
    <variation>A</variation>
    <location>
        <position position="32"/>
    </location>
</feature>
<feature type="mutagenesis site" description="No effect on interaction with PARD6B." evidence="13">
    <original>R</original>
    <variation>A</variation>
    <location>
        <position position="33"/>
    </location>
</feature>
<feature type="mutagenesis site" description="No effect on interaction with PARD6B." evidence="13">
    <original>E</original>
    <variation>A</variation>
    <location>
        <position position="34"/>
    </location>
</feature>
<feature type="mutagenesis site" description="No effect on interaction with PARD6B." evidence="13">
    <original>A</original>
    <variation>G</variation>
    <location>
        <position position="36"/>
    </location>
</feature>
<feature type="mutagenesis site" description="Prevents interaction with PARD6B. Does not affect localization to the tight junctions." evidence="13">
    <original>V</original>
    <variation>G</variation>
    <location>
        <position position="37"/>
    </location>
</feature>
<feature type="mutagenesis site" description="No effect on interaction with PARD6B." evidence="13">
    <original>V</original>
    <variation>I</variation>
    <location>
        <position position="37"/>
    </location>
</feature>
<feature type="mutagenesis site" description="Prevents interaction with PARD6B." evidence="13">
    <original>D</original>
    <variation>A</variation>
    <location>
        <position position="38"/>
    </location>
</feature>
<feature type="mutagenesis site" description="No effect on interaction with PARD6B." evidence="13">
    <original>D</original>
    <variation>E</variation>
    <location>
        <position position="38"/>
    </location>
</feature>
<feature type="mutagenesis site" description="No effect on interaction with PARD6B." evidence="13">
    <original>C</original>
    <variation>A</variation>
    <location>
        <position position="39"/>
    </location>
</feature>
<feature type="mutagenesis site" description="No effect on interaction with PARD6B." evidence="13">
    <original>P</original>
    <variation>A</variation>
    <location>
        <position position="40"/>
    </location>
</feature>
<feature type="mutagenesis site" description="No effect on PARD6B interaction. Prevents interaction with PATJ; when associated with G-154." evidence="10">
    <original>L</original>
    <variation>G</variation>
    <location>
        <position position="150"/>
    </location>
</feature>
<feature type="mutagenesis site" description="No effect on PARD6B interaction. Prevents interaction with PATJ; when associated with G-150." evidence="10">
    <original>V</original>
    <variation>G</variation>
    <location>
        <position position="154"/>
    </location>
</feature>
<feature type="mutagenesis site" description="No effect on interaction with LIN7C." evidence="9">
    <original>E</original>
    <variation>Q</variation>
    <location>
        <position position="207"/>
    </location>
</feature>
<feature type="mutagenesis site" description="Prevents interaction with LIN7C." evidence="9">
    <original>L</original>
    <variation>G</variation>
    <location>
        <position position="208"/>
    </location>
</feature>
<feature type="mutagenesis site" description="Prevents interaction with LIN7C." evidence="9">
    <original>L</original>
    <variation>G</variation>
    <location>
        <position position="212"/>
    </location>
</feature>
<feature type="mutagenesis site" description="No effect on interaction with LIN7C." evidence="9">
    <original>H</original>
    <variation>N</variation>
    <location>
        <position position="216"/>
    </location>
</feature>
<feature type="mutagenesis site" description="Partially prevents interaction with LIN7C." evidence="9">
    <original>L</original>
    <variation>G</variation>
    <location>
        <position position="221"/>
    </location>
</feature>
<feature type="mutagenesis site" description="Partially prevents interaction with LIN7C." evidence="9">
    <original>H</original>
    <variation>N</variation>
    <location>
        <position position="224"/>
    </location>
</feature>
<feature type="mutagenesis site" description="Prevents interaction with LIN7C." evidence="9">
    <original>D</original>
    <variation>N</variation>
    <location>
        <position position="225"/>
    </location>
</feature>
<feature type="mutagenesis site" description="Prevents interaction with LIN7C." evidence="9">
    <original>V</original>
    <variation>G</variation>
    <location>
        <position position="227"/>
    </location>
</feature>
<feature type="mutagenesis site" description="Failure to restore localization of PALS1 and PATJ to cell-cell contacts and to restore tight junction and adherens junction formation in cells where PALS1 has been knocked down." evidence="19">
    <original>L</original>
    <variation>P</variation>
    <location>
        <position position="379"/>
    </location>
</feature>
<feature type="helix" evidence="36">
    <location>
        <begin position="123"/>
        <end position="135"/>
    </location>
</feature>
<feature type="helix" evidence="36">
    <location>
        <begin position="141"/>
        <end position="155"/>
    </location>
</feature>
<feature type="helix" evidence="36">
    <location>
        <begin position="157"/>
        <end position="169"/>
    </location>
</feature>
<feature type="strand" evidence="35">
    <location>
        <begin position="247"/>
        <end position="249"/>
    </location>
</feature>
<feature type="strand" evidence="35">
    <location>
        <begin position="255"/>
        <end position="261"/>
    </location>
</feature>
<feature type="strand" evidence="35">
    <location>
        <begin position="269"/>
        <end position="273"/>
    </location>
</feature>
<feature type="strand" evidence="35">
    <location>
        <begin position="275"/>
        <end position="283"/>
    </location>
</feature>
<feature type="helix" evidence="35">
    <location>
        <begin position="288"/>
        <end position="292"/>
    </location>
</feature>
<feature type="strand" evidence="35">
    <location>
        <begin position="300"/>
        <end position="304"/>
    </location>
</feature>
<feature type="helix" evidence="35">
    <location>
        <begin position="314"/>
        <end position="323"/>
    </location>
</feature>
<feature type="strand" evidence="35">
    <location>
        <begin position="326"/>
        <end position="333"/>
    </location>
</feature>
<accession>Q9JLB2</accession>
<evidence type="ECO:0000250" key="1">
    <source>
        <dbReference type="UniProtKB" id="B4F7E7"/>
    </source>
</evidence>
<evidence type="ECO:0000250" key="2">
    <source>
        <dbReference type="UniProtKB" id="E2QY99"/>
    </source>
</evidence>
<evidence type="ECO:0000250" key="3">
    <source>
        <dbReference type="UniProtKB" id="Q8N3R9"/>
    </source>
</evidence>
<evidence type="ECO:0000255" key="4">
    <source>
        <dbReference type="PROSITE-ProRule" id="PRU00100"/>
    </source>
</evidence>
<evidence type="ECO:0000255" key="5">
    <source>
        <dbReference type="PROSITE-ProRule" id="PRU00143"/>
    </source>
</evidence>
<evidence type="ECO:0000255" key="6">
    <source>
        <dbReference type="PROSITE-ProRule" id="PRU00192"/>
    </source>
</evidence>
<evidence type="ECO:0000255" key="7">
    <source>
        <dbReference type="PROSITE-ProRule" id="PRU00365"/>
    </source>
</evidence>
<evidence type="ECO:0000256" key="8">
    <source>
        <dbReference type="SAM" id="MobiDB-lite"/>
    </source>
</evidence>
<evidence type="ECO:0000269" key="9">
    <source>
    </source>
</evidence>
<evidence type="ECO:0000269" key="10">
    <source>
    </source>
</evidence>
<evidence type="ECO:0000269" key="11">
    <source>
    </source>
</evidence>
<evidence type="ECO:0000269" key="12">
    <source>
    </source>
</evidence>
<evidence type="ECO:0000269" key="13">
    <source>
    </source>
</evidence>
<evidence type="ECO:0000269" key="14">
    <source>
    </source>
</evidence>
<evidence type="ECO:0000269" key="15">
    <source>
    </source>
</evidence>
<evidence type="ECO:0000269" key="16">
    <source>
    </source>
</evidence>
<evidence type="ECO:0000269" key="17">
    <source>
    </source>
</evidence>
<evidence type="ECO:0000269" key="18">
    <source>
    </source>
</evidence>
<evidence type="ECO:0000269" key="19">
    <source>
    </source>
</evidence>
<evidence type="ECO:0000269" key="20">
    <source>
    </source>
</evidence>
<evidence type="ECO:0000269" key="21">
    <source>
    </source>
</evidence>
<evidence type="ECO:0000269" key="22">
    <source>
    </source>
</evidence>
<evidence type="ECO:0000269" key="23">
    <source>
    </source>
</evidence>
<evidence type="ECO:0000269" key="24">
    <source>
    </source>
</evidence>
<evidence type="ECO:0000269" key="25">
    <source>
    </source>
</evidence>
<evidence type="ECO:0000269" key="26">
    <source>
    </source>
</evidence>
<evidence type="ECO:0000269" key="27">
    <source>
    </source>
</evidence>
<evidence type="ECO:0000269" key="28">
    <source>
    </source>
</evidence>
<evidence type="ECO:0000269" key="29">
    <source>
    </source>
</evidence>
<evidence type="ECO:0000303" key="30">
    <source>
    </source>
</evidence>
<evidence type="ECO:0000303" key="31">
    <source>
    </source>
</evidence>
<evidence type="ECO:0000305" key="32"/>
<evidence type="ECO:0000312" key="33">
    <source>
        <dbReference type="MGI" id="MGI:1927339"/>
    </source>
</evidence>
<evidence type="ECO:0007744" key="34">
    <source>
    </source>
</evidence>
<evidence type="ECO:0007829" key="35">
    <source>
        <dbReference type="PDB" id="1VA8"/>
    </source>
</evidence>
<evidence type="ECO:0007829" key="36">
    <source>
        <dbReference type="PDB" id="1VF6"/>
    </source>
</evidence>
<dbReference type="EMBL" id="AF199008">
    <property type="protein sequence ID" value="AAF63789.1"/>
    <property type="molecule type" value="mRNA"/>
</dbReference>
<dbReference type="CCDS" id="CCDS26001.1"/>
<dbReference type="RefSeq" id="NP_062525.1">
    <property type="nucleotide sequence ID" value="NM_019579.3"/>
</dbReference>
<dbReference type="RefSeq" id="XP_006516160.1">
    <property type="nucleotide sequence ID" value="XM_006516097.5"/>
</dbReference>
<dbReference type="PDB" id="1VA8">
    <property type="method" value="NMR"/>
    <property type="chains" value="A=236-335"/>
</dbReference>
<dbReference type="PDB" id="1VF6">
    <property type="method" value="X-ray"/>
    <property type="resolution" value="2.10 A"/>
    <property type="chains" value="C/D=123-180"/>
</dbReference>
<dbReference type="PDBsum" id="1VA8"/>
<dbReference type="PDBsum" id="1VF6"/>
<dbReference type="BMRB" id="Q9JLB2"/>
<dbReference type="SMR" id="Q9JLB2"/>
<dbReference type="BioGRID" id="207851">
    <property type="interactions" value="11"/>
</dbReference>
<dbReference type="CORUM" id="Q9JLB2"/>
<dbReference type="FunCoup" id="Q9JLB2">
    <property type="interactions" value="653"/>
</dbReference>
<dbReference type="IntAct" id="Q9JLB2">
    <property type="interactions" value="3"/>
</dbReference>
<dbReference type="MINT" id="Q9JLB2"/>
<dbReference type="STRING" id="10090.ENSMUSP00000080683"/>
<dbReference type="GlyGen" id="Q9JLB2">
    <property type="glycosylation" value="2 sites, 1 N-linked glycan (1 site), 1 O-linked glycan (1 site)"/>
</dbReference>
<dbReference type="iPTMnet" id="Q9JLB2"/>
<dbReference type="PhosphoSitePlus" id="Q9JLB2"/>
<dbReference type="jPOST" id="Q9JLB2"/>
<dbReference type="PaxDb" id="10090-ENSMUSP00000080683"/>
<dbReference type="ProteomicsDB" id="295587"/>
<dbReference type="Pumba" id="Q9JLB2"/>
<dbReference type="Antibodypedia" id="20">
    <property type="antibodies" value="352 antibodies from 37 providers"/>
</dbReference>
<dbReference type="DNASU" id="56217"/>
<dbReference type="Ensembl" id="ENSMUST00000082024.7">
    <property type="protein sequence ID" value="ENSMUSP00000080683.6"/>
    <property type="gene ID" value="ENSMUSG00000021112.10"/>
</dbReference>
<dbReference type="GeneID" id="56217"/>
<dbReference type="KEGG" id="mmu:56217"/>
<dbReference type="UCSC" id="uc007nzg.2">
    <property type="organism name" value="mouse"/>
</dbReference>
<dbReference type="AGR" id="MGI:1927339"/>
<dbReference type="CTD" id="64398"/>
<dbReference type="MGI" id="MGI:1927339">
    <property type="gene designation" value="Pals1"/>
</dbReference>
<dbReference type="VEuPathDB" id="HostDB:ENSMUSG00000021112"/>
<dbReference type="eggNOG" id="KOG0609">
    <property type="taxonomic scope" value="Eukaryota"/>
</dbReference>
<dbReference type="GeneTree" id="ENSGT00940000156087"/>
<dbReference type="HOGENOM" id="CLU_001715_5_4_1"/>
<dbReference type="InParanoid" id="Q9JLB2"/>
<dbReference type="OMA" id="FSHRTMT"/>
<dbReference type="OrthoDB" id="43580at2759"/>
<dbReference type="PhylomeDB" id="Q9JLB2"/>
<dbReference type="TreeFam" id="TF314263"/>
<dbReference type="BioGRID-ORCS" id="56217">
    <property type="hits" value="3 hits in 79 CRISPR screens"/>
</dbReference>
<dbReference type="ChiTaRS" id="Mpp5">
    <property type="organism name" value="mouse"/>
</dbReference>
<dbReference type="EvolutionaryTrace" id="Q9JLB2"/>
<dbReference type="PRO" id="PR:Q9JLB2"/>
<dbReference type="Proteomes" id="UP000000589">
    <property type="component" value="Chromosome 12"/>
</dbReference>
<dbReference type="RNAct" id="Q9JLB2">
    <property type="molecule type" value="protein"/>
</dbReference>
<dbReference type="Bgee" id="ENSMUSG00000021112">
    <property type="expression patterns" value="Expressed in dorsal pancreas and 255 other cell types or tissues"/>
</dbReference>
<dbReference type="ExpressionAtlas" id="Q9JLB2">
    <property type="expression patterns" value="baseline and differential"/>
</dbReference>
<dbReference type="GO" id="GO:0005912">
    <property type="term" value="C:adherens junction"/>
    <property type="evidence" value="ECO:0000314"/>
    <property type="project" value="UniProtKB"/>
</dbReference>
<dbReference type="GO" id="GO:0045177">
    <property type="term" value="C:apical part of cell"/>
    <property type="evidence" value="ECO:0000314"/>
    <property type="project" value="MGI"/>
</dbReference>
<dbReference type="GO" id="GO:0016324">
    <property type="term" value="C:apical plasma membrane"/>
    <property type="evidence" value="ECO:0007669"/>
    <property type="project" value="UniProtKB-SubCell"/>
</dbReference>
<dbReference type="GO" id="GO:0030424">
    <property type="term" value="C:axon"/>
    <property type="evidence" value="ECO:0007669"/>
    <property type="project" value="UniProtKB-SubCell"/>
</dbReference>
<dbReference type="GO" id="GO:0005923">
    <property type="term" value="C:bicellular tight junction"/>
    <property type="evidence" value="ECO:0007669"/>
    <property type="project" value="UniProtKB-SubCell"/>
</dbReference>
<dbReference type="GO" id="GO:0005794">
    <property type="term" value="C:Golgi apparatus"/>
    <property type="evidence" value="ECO:0007669"/>
    <property type="project" value="UniProtKB-SubCell"/>
</dbReference>
<dbReference type="GO" id="GO:0043219">
    <property type="term" value="C:lateral loop"/>
    <property type="evidence" value="ECO:0000314"/>
    <property type="project" value="BHF-UCL"/>
</dbReference>
<dbReference type="GO" id="GO:0016020">
    <property type="term" value="C:membrane"/>
    <property type="evidence" value="ECO:0000250"/>
    <property type="project" value="MGI"/>
</dbReference>
<dbReference type="GO" id="GO:0035749">
    <property type="term" value="C:myelin sheath adaxonal region"/>
    <property type="evidence" value="ECO:0000314"/>
    <property type="project" value="BHF-UCL"/>
</dbReference>
<dbReference type="GO" id="GO:0043204">
    <property type="term" value="C:perikaryon"/>
    <property type="evidence" value="ECO:0007669"/>
    <property type="project" value="UniProtKB-SubCell"/>
</dbReference>
<dbReference type="GO" id="GO:0005886">
    <property type="term" value="C:plasma membrane"/>
    <property type="evidence" value="ECO:0000314"/>
    <property type="project" value="UniProtKB"/>
</dbReference>
<dbReference type="GO" id="GO:0032991">
    <property type="term" value="C:protein-containing complex"/>
    <property type="evidence" value="ECO:0007669"/>
    <property type="project" value="Ensembl"/>
</dbReference>
<dbReference type="GO" id="GO:0043220">
    <property type="term" value="C:Schmidt-Lanterman incisure"/>
    <property type="evidence" value="ECO:0000314"/>
    <property type="project" value="BHF-UCL"/>
</dbReference>
<dbReference type="GO" id="GO:0005524">
    <property type="term" value="F:ATP binding"/>
    <property type="evidence" value="ECO:0007669"/>
    <property type="project" value="UniProtKB-KW"/>
</dbReference>
<dbReference type="GO" id="GO:0004385">
    <property type="term" value="F:guanylate kinase activity"/>
    <property type="evidence" value="ECO:0000250"/>
    <property type="project" value="MGI"/>
</dbReference>
<dbReference type="GO" id="GO:0042802">
    <property type="term" value="F:identical protein binding"/>
    <property type="evidence" value="ECO:0007669"/>
    <property type="project" value="Ensembl"/>
</dbReference>
<dbReference type="GO" id="GO:0019904">
    <property type="term" value="F:protein domain specific binding"/>
    <property type="evidence" value="ECO:0007669"/>
    <property type="project" value="Ensembl"/>
</dbReference>
<dbReference type="GO" id="GO:0021954">
    <property type="term" value="P:central nervous system neuron development"/>
    <property type="evidence" value="ECO:0000315"/>
    <property type="project" value="UniProtKB"/>
</dbReference>
<dbReference type="GO" id="GO:0021987">
    <property type="term" value="P:cerebral cortex development"/>
    <property type="evidence" value="ECO:0000315"/>
    <property type="project" value="UniProtKB"/>
</dbReference>
<dbReference type="GO" id="GO:0010467">
    <property type="term" value="P:gene expression"/>
    <property type="evidence" value="ECO:0000315"/>
    <property type="project" value="MGI"/>
</dbReference>
<dbReference type="GO" id="GO:0002011">
    <property type="term" value="P:morphogenesis of an epithelial sheet"/>
    <property type="evidence" value="ECO:0007669"/>
    <property type="project" value="Ensembl"/>
</dbReference>
<dbReference type="GO" id="GO:0032288">
    <property type="term" value="P:myelin assembly"/>
    <property type="evidence" value="ECO:0007669"/>
    <property type="project" value="Ensembl"/>
</dbReference>
<dbReference type="GO" id="GO:0032287">
    <property type="term" value="P:peripheral nervous system myelin maintenance"/>
    <property type="evidence" value="ECO:0000315"/>
    <property type="project" value="BHF-UCL"/>
</dbReference>
<dbReference type="GO" id="GO:0007009">
    <property type="term" value="P:plasma membrane organization"/>
    <property type="evidence" value="ECO:0000315"/>
    <property type="project" value="MGI"/>
</dbReference>
<dbReference type="GO" id="GO:0008104">
    <property type="term" value="P:protein localization"/>
    <property type="evidence" value="ECO:0000315"/>
    <property type="project" value="MGI"/>
</dbReference>
<dbReference type="GO" id="GO:0035750">
    <property type="term" value="P:protein localization to myelin sheath abaxonal region"/>
    <property type="evidence" value="ECO:0000315"/>
    <property type="project" value="BHF-UCL"/>
</dbReference>
<dbReference type="GO" id="GO:0072659">
    <property type="term" value="P:protein localization to plasma membrane"/>
    <property type="evidence" value="ECO:0007669"/>
    <property type="project" value="Ensembl"/>
</dbReference>
<dbReference type="GO" id="GO:0017015">
    <property type="term" value="P:regulation of transforming growth factor beta receptor signaling pathway"/>
    <property type="evidence" value="ECO:0000315"/>
    <property type="project" value="UniProtKB"/>
</dbReference>
<dbReference type="CDD" id="cd00071">
    <property type="entry name" value="GMPK"/>
    <property type="match status" value="1"/>
</dbReference>
<dbReference type="CDD" id="cd06798">
    <property type="entry name" value="PDZ_MPP5-like"/>
    <property type="match status" value="1"/>
</dbReference>
<dbReference type="CDD" id="cd12036">
    <property type="entry name" value="SH3_MPP5"/>
    <property type="match status" value="1"/>
</dbReference>
<dbReference type="FunFam" id="3.30.63.10:FF:000002">
    <property type="entry name" value="Guanylate kinase 1"/>
    <property type="match status" value="1"/>
</dbReference>
<dbReference type="FunFam" id="2.30.30.40:FF:000105">
    <property type="entry name" value="MAGUK p55 subfamily member 5"/>
    <property type="match status" value="1"/>
</dbReference>
<dbReference type="FunFam" id="2.30.42.10:FF:000088">
    <property type="entry name" value="MAGUK p55 subfamily member 5"/>
    <property type="match status" value="1"/>
</dbReference>
<dbReference type="FunFam" id="3.40.50.300:FF:000469">
    <property type="entry name" value="MAGUK p55 subfamily member 5"/>
    <property type="match status" value="1"/>
</dbReference>
<dbReference type="Gene3D" id="2.30.42.10">
    <property type="match status" value="1"/>
</dbReference>
<dbReference type="Gene3D" id="1.10.287.650">
    <property type="entry name" value="L27 domain"/>
    <property type="match status" value="2"/>
</dbReference>
<dbReference type="Gene3D" id="3.40.50.300">
    <property type="entry name" value="P-loop containing nucleotide triphosphate hydrolases"/>
    <property type="match status" value="1"/>
</dbReference>
<dbReference type="Gene3D" id="2.30.30.40">
    <property type="entry name" value="SH3 Domains"/>
    <property type="match status" value="1"/>
</dbReference>
<dbReference type="InterPro" id="IPR008145">
    <property type="entry name" value="GK/Ca_channel_bsu"/>
</dbReference>
<dbReference type="InterPro" id="IPR008144">
    <property type="entry name" value="Guanylate_kin-like_dom"/>
</dbReference>
<dbReference type="InterPro" id="IPR020590">
    <property type="entry name" value="Guanylate_kinase_CS"/>
</dbReference>
<dbReference type="InterPro" id="IPR014775">
    <property type="entry name" value="L27_C"/>
</dbReference>
<dbReference type="InterPro" id="IPR004172">
    <property type="entry name" value="L27_dom"/>
</dbReference>
<dbReference type="InterPro" id="IPR036892">
    <property type="entry name" value="L27_dom_sf"/>
</dbReference>
<dbReference type="InterPro" id="IPR015145">
    <property type="entry name" value="L27_N"/>
</dbReference>
<dbReference type="InterPro" id="IPR050716">
    <property type="entry name" value="MAGUK"/>
</dbReference>
<dbReference type="InterPro" id="IPR035601">
    <property type="entry name" value="MPP5_SH3"/>
</dbReference>
<dbReference type="InterPro" id="IPR027417">
    <property type="entry name" value="P-loop_NTPase"/>
</dbReference>
<dbReference type="InterPro" id="IPR001478">
    <property type="entry name" value="PDZ"/>
</dbReference>
<dbReference type="InterPro" id="IPR036034">
    <property type="entry name" value="PDZ_sf"/>
</dbReference>
<dbReference type="InterPro" id="IPR036028">
    <property type="entry name" value="SH3-like_dom_sf"/>
</dbReference>
<dbReference type="InterPro" id="IPR001452">
    <property type="entry name" value="SH3_domain"/>
</dbReference>
<dbReference type="PANTHER" id="PTHR23122">
    <property type="entry name" value="MEMBRANE-ASSOCIATED GUANYLATE KINASE MAGUK"/>
    <property type="match status" value="1"/>
</dbReference>
<dbReference type="Pfam" id="PF00625">
    <property type="entry name" value="Guanylate_kin"/>
    <property type="match status" value="1"/>
</dbReference>
<dbReference type="Pfam" id="PF02828">
    <property type="entry name" value="L27"/>
    <property type="match status" value="1"/>
</dbReference>
<dbReference type="Pfam" id="PF09060">
    <property type="entry name" value="L27_N"/>
    <property type="match status" value="1"/>
</dbReference>
<dbReference type="Pfam" id="PF00595">
    <property type="entry name" value="PDZ"/>
    <property type="match status" value="1"/>
</dbReference>
<dbReference type="Pfam" id="PF07653">
    <property type="entry name" value="SH3_2"/>
    <property type="match status" value="1"/>
</dbReference>
<dbReference type="SMART" id="SM00072">
    <property type="entry name" value="GuKc"/>
    <property type="match status" value="1"/>
</dbReference>
<dbReference type="SMART" id="SM00569">
    <property type="entry name" value="L27"/>
    <property type="match status" value="2"/>
</dbReference>
<dbReference type="SMART" id="SM00228">
    <property type="entry name" value="PDZ"/>
    <property type="match status" value="1"/>
</dbReference>
<dbReference type="SMART" id="SM00326">
    <property type="entry name" value="SH3"/>
    <property type="match status" value="1"/>
</dbReference>
<dbReference type="SUPFAM" id="SSF101288">
    <property type="entry name" value="L27 domain"/>
    <property type="match status" value="2"/>
</dbReference>
<dbReference type="SUPFAM" id="SSF52540">
    <property type="entry name" value="P-loop containing nucleoside triphosphate hydrolases"/>
    <property type="match status" value="1"/>
</dbReference>
<dbReference type="SUPFAM" id="SSF50156">
    <property type="entry name" value="PDZ domain-like"/>
    <property type="match status" value="1"/>
</dbReference>
<dbReference type="SUPFAM" id="SSF50044">
    <property type="entry name" value="SH3-domain"/>
    <property type="match status" value="1"/>
</dbReference>
<dbReference type="PROSITE" id="PS00856">
    <property type="entry name" value="GUANYLATE_KINASE_1"/>
    <property type="match status" value="1"/>
</dbReference>
<dbReference type="PROSITE" id="PS50052">
    <property type="entry name" value="GUANYLATE_KINASE_2"/>
    <property type="match status" value="1"/>
</dbReference>
<dbReference type="PROSITE" id="PS51022">
    <property type="entry name" value="L27"/>
    <property type="match status" value="2"/>
</dbReference>
<dbReference type="PROSITE" id="PS50106">
    <property type="entry name" value="PDZ"/>
    <property type="match status" value="1"/>
</dbReference>
<dbReference type="PROSITE" id="PS50002">
    <property type="entry name" value="SH3"/>
    <property type="match status" value="1"/>
</dbReference>
<protein>
    <recommendedName>
        <fullName evidence="32">Protein PALS1</fullName>
    </recommendedName>
    <alternativeName>
        <fullName>MAGUK p55 subfamily member 5</fullName>
    </alternativeName>
    <alternativeName>
        <fullName evidence="30 31">Protein associated with Lin-7 1</fullName>
    </alternativeName>
</protein>
<keyword id="KW-0002">3D-structure</keyword>
<keyword id="KW-0067">ATP-binding</keyword>
<keyword id="KW-0965">Cell junction</keyword>
<keyword id="KW-1003">Cell membrane</keyword>
<keyword id="KW-0966">Cell projection</keyword>
<keyword id="KW-0333">Golgi apparatus</keyword>
<keyword id="KW-0472">Membrane</keyword>
<keyword id="KW-0547">Nucleotide-binding</keyword>
<keyword id="KW-0597">Phosphoprotein</keyword>
<keyword id="KW-1185">Reference proteome</keyword>
<keyword id="KW-0677">Repeat</keyword>
<keyword id="KW-0728">SH3 domain</keyword>
<keyword id="KW-0796">Tight junction</keyword>
<sequence>MTTSYMNGHVTEESDSGIKNLDLASPEEYPKHREMAVDCPGDLGTRMMPVRRSAQLERIRQQQEDMRRRREEEGKKQELDLNSSMRLKKLAQIPPKTGIDNPIFDTEEGIVLESPHYAVNILDVEDLFSSLKHIQHTLVDSQSQEDISLLLQLVQNRDFQNAFKIHNAVTVHMSKASPPFPLIANVQDLVQEVQTVLKPVHQKEGQELTALLNAPHIQALLLAHDKVAEQEMQLEPITDERVYESIGHYGGETVKIVRIEKARDIPLGATVRNEMDSVIISRIVKGGAAEKSGLLHEGDEVLEINGIEIRGKDVNEVFDLLSDMHGTLTFVLIPSQQIKPPPAKETVIHVKAHFDYDPSDDPYVPCRELGLSFQKGDILHVISQEDPNWWQAYREGDEDNQPLAGLVPGKSFQQQREAMKQTIEEDKEPEKSGKLWCAKKNKKKRKKVLYNANKNDDYDNEEILTYEEMSLYHQPANRKRPIILIGPQNCGQNELRQRLMNKEKDRFASAVPHTTRNRRDHEVAGRDYHFVSRQAFEADIAAGKFIEHGEFEKNLYGTSIDSVRQVINSGKICLLSLRTQSLKTLRNSDLKPYIIFIAPPSQERLRALLAKEGKNPKPEELREIIEKTREMEQNNGHYFDTAIVNSDLDKAYQELLRLINKLDTEPQWVPSTWLR</sequence>
<proteinExistence type="evidence at protein level"/>
<organism>
    <name type="scientific">Mus musculus</name>
    <name type="common">Mouse</name>
    <dbReference type="NCBI Taxonomy" id="10090"/>
    <lineage>
        <taxon>Eukaryota</taxon>
        <taxon>Metazoa</taxon>
        <taxon>Chordata</taxon>
        <taxon>Craniata</taxon>
        <taxon>Vertebrata</taxon>
        <taxon>Euteleostomi</taxon>
        <taxon>Mammalia</taxon>
        <taxon>Eutheria</taxon>
        <taxon>Euarchontoglires</taxon>
        <taxon>Glires</taxon>
        <taxon>Rodentia</taxon>
        <taxon>Myomorpha</taxon>
        <taxon>Muroidea</taxon>
        <taxon>Muridae</taxon>
        <taxon>Murinae</taxon>
        <taxon>Mus</taxon>
        <taxon>Mus</taxon>
    </lineage>
</organism>
<gene>
    <name evidence="30 33" type="primary">Pals1</name>
    <name evidence="33" type="synonym">Mpp5</name>
</gene>
<name>PALS1_MOUSE</name>